<comment type="function">
    <text evidence="1">Probably involved in the biogenesis of the ribosome.</text>
</comment>
<name>BRIX_METBF</name>
<organism>
    <name type="scientific">Methanosarcina barkeri (strain Fusaro / DSM 804)</name>
    <dbReference type="NCBI Taxonomy" id="269797"/>
    <lineage>
        <taxon>Archaea</taxon>
        <taxon>Methanobacteriati</taxon>
        <taxon>Methanobacteriota</taxon>
        <taxon>Stenosarchaea group</taxon>
        <taxon>Methanomicrobia</taxon>
        <taxon>Methanosarcinales</taxon>
        <taxon>Methanosarcinaceae</taxon>
        <taxon>Methanosarcina</taxon>
    </lineage>
</organism>
<proteinExistence type="inferred from homology"/>
<reference key="1">
    <citation type="journal article" date="2006" name="J. Bacteriol.">
        <title>The Methanosarcina barkeri genome: comparative analysis with Methanosarcina acetivorans and Methanosarcina mazei reveals extensive rearrangement within methanosarcinal genomes.</title>
        <authorList>
            <person name="Maeder D.L."/>
            <person name="Anderson I."/>
            <person name="Brettin T.S."/>
            <person name="Bruce D.C."/>
            <person name="Gilna P."/>
            <person name="Han C.S."/>
            <person name="Lapidus A."/>
            <person name="Metcalf W.W."/>
            <person name="Saunders E."/>
            <person name="Tapia R."/>
            <person name="Sowers K.R."/>
        </authorList>
    </citation>
    <scope>NUCLEOTIDE SEQUENCE [LARGE SCALE GENOMIC DNA]</scope>
    <source>
        <strain>Fusaro / DSM 804</strain>
    </source>
</reference>
<evidence type="ECO:0000255" key="1">
    <source>
        <dbReference type="HAMAP-Rule" id="MF_00699"/>
    </source>
</evidence>
<gene>
    <name type="ordered locus">Mbar_A3051</name>
</gene>
<dbReference type="EMBL" id="CP000099">
    <property type="protein sequence ID" value="AAZ71942.1"/>
    <property type="molecule type" value="Genomic_DNA"/>
</dbReference>
<dbReference type="SMR" id="Q467K0"/>
<dbReference type="STRING" id="269797.Mbar_A3051"/>
<dbReference type="PaxDb" id="269797-Mbar_A3051"/>
<dbReference type="KEGG" id="mba:Mbar_A3051"/>
<dbReference type="eggNOG" id="arCOG03247">
    <property type="taxonomic scope" value="Archaea"/>
</dbReference>
<dbReference type="HOGENOM" id="CLU_107897_2_0_2"/>
<dbReference type="OrthoDB" id="117530at2157"/>
<dbReference type="GO" id="GO:0019843">
    <property type="term" value="F:rRNA binding"/>
    <property type="evidence" value="ECO:0007669"/>
    <property type="project" value="InterPro"/>
</dbReference>
<dbReference type="GO" id="GO:0006364">
    <property type="term" value="P:rRNA processing"/>
    <property type="evidence" value="ECO:0007669"/>
    <property type="project" value="InterPro"/>
</dbReference>
<dbReference type="Gene3D" id="3.40.50.10480">
    <property type="entry name" value="Probable brix-domain ribosomal biogenesis protein"/>
    <property type="match status" value="1"/>
</dbReference>
<dbReference type="HAMAP" id="MF_00699">
    <property type="entry name" value="BriX"/>
    <property type="match status" value="1"/>
</dbReference>
<dbReference type="InterPro" id="IPR007109">
    <property type="entry name" value="Brix"/>
</dbReference>
<dbReference type="InterPro" id="IPR023548">
    <property type="entry name" value="Brix_dom_Rbsml_bgen_prot"/>
</dbReference>
<dbReference type="NCBIfam" id="NF002093">
    <property type="entry name" value="PRK00933.1-3"/>
    <property type="match status" value="1"/>
</dbReference>
<dbReference type="SMART" id="SM00879">
    <property type="entry name" value="Brix"/>
    <property type="match status" value="1"/>
</dbReference>
<dbReference type="SUPFAM" id="SSF52954">
    <property type="entry name" value="Class II aaRS ABD-related"/>
    <property type="match status" value="1"/>
</dbReference>
<dbReference type="PROSITE" id="PS50833">
    <property type="entry name" value="BRIX"/>
    <property type="match status" value="1"/>
</dbReference>
<protein>
    <recommendedName>
        <fullName evidence="1">Probable Brix domain-containing ribosomal biogenesis protein</fullName>
    </recommendedName>
</protein>
<sequence length="157" mass="17793">MLVTSSRKPSARTRTLCKLLSRFIAGRCMTRGKMGMQELLEFAEGGPLIVIGEYHGNPGELSFYDEAGELLFSLRFTDWYSKELDSYWFSGIEPKLAGQGEIAEAFKVFFHFQRVENDKIDQLPPSSTLIVVGENDIDFMGSGKSLFKLNLRGFKKY</sequence>
<accession>Q467K0</accession>
<keyword id="KW-0690">Ribosome biogenesis</keyword>
<feature type="chain" id="PRO_0000120269" description="Probable Brix domain-containing ribosomal biogenesis protein">
    <location>
        <begin position="1"/>
        <end position="157"/>
    </location>
</feature>
<feature type="domain" description="Brix" evidence="1">
    <location>
        <begin position="1"/>
        <end position="157"/>
    </location>
</feature>